<accession>B4LRY2</accession>
<name>DRE2_DROVI</name>
<proteinExistence type="inferred from homology"/>
<feature type="chain" id="PRO_0000392323" description="Anamorsin homolog">
    <location>
        <begin position="1"/>
        <end position="248"/>
    </location>
</feature>
<feature type="region of interest" description="N-terminal SAM-like domain" evidence="1">
    <location>
        <begin position="4"/>
        <end position="130"/>
    </location>
</feature>
<feature type="region of interest" description="Linker" evidence="1">
    <location>
        <begin position="131"/>
        <end position="161"/>
    </location>
</feature>
<feature type="region of interest" description="Fe-S binding site A" evidence="1">
    <location>
        <begin position="172"/>
        <end position="186"/>
    </location>
</feature>
<feature type="region of interest" description="Fe-S binding site B" evidence="1">
    <location>
        <begin position="209"/>
        <end position="223"/>
    </location>
</feature>
<feature type="short sequence motif" description="Cx2C motif 1" evidence="1">
    <location>
        <begin position="209"/>
        <end position="212"/>
    </location>
</feature>
<feature type="short sequence motif" description="Cx2C motif 2" evidence="1">
    <location>
        <begin position="220"/>
        <end position="223"/>
    </location>
</feature>
<feature type="binding site" evidence="1">
    <location>
        <position position="172"/>
    </location>
    <ligand>
        <name>[2Fe-2S] cluster</name>
        <dbReference type="ChEBI" id="CHEBI:190135"/>
    </ligand>
</feature>
<feature type="binding site" evidence="1">
    <location>
        <position position="181"/>
    </location>
    <ligand>
        <name>[2Fe-2S] cluster</name>
        <dbReference type="ChEBI" id="CHEBI:190135"/>
    </ligand>
</feature>
<feature type="binding site" evidence="1">
    <location>
        <position position="184"/>
    </location>
    <ligand>
        <name>[2Fe-2S] cluster</name>
        <dbReference type="ChEBI" id="CHEBI:190135"/>
    </ligand>
</feature>
<feature type="binding site" evidence="1">
    <location>
        <position position="186"/>
    </location>
    <ligand>
        <name>[2Fe-2S] cluster</name>
        <dbReference type="ChEBI" id="CHEBI:190135"/>
    </ligand>
</feature>
<feature type="binding site" evidence="1">
    <location>
        <position position="209"/>
    </location>
    <ligand>
        <name>[4Fe-4S] cluster</name>
        <dbReference type="ChEBI" id="CHEBI:49883"/>
    </ligand>
</feature>
<feature type="binding site" evidence="1">
    <location>
        <position position="212"/>
    </location>
    <ligand>
        <name>[4Fe-4S] cluster</name>
        <dbReference type="ChEBI" id="CHEBI:49883"/>
    </ligand>
</feature>
<feature type="binding site" evidence="1">
    <location>
        <position position="220"/>
    </location>
    <ligand>
        <name>[4Fe-4S] cluster</name>
        <dbReference type="ChEBI" id="CHEBI:49883"/>
    </ligand>
</feature>
<feature type="binding site" evidence="1">
    <location>
        <position position="223"/>
    </location>
    <ligand>
        <name>[4Fe-4S] cluster</name>
        <dbReference type="ChEBI" id="CHEBI:49883"/>
    </ligand>
</feature>
<reference key="1">
    <citation type="journal article" date="2007" name="Nature">
        <title>Evolution of genes and genomes on the Drosophila phylogeny.</title>
        <authorList>
            <consortium name="Drosophila 12 genomes consortium"/>
        </authorList>
    </citation>
    <scope>NUCLEOTIDE SEQUENCE [LARGE SCALE GENOMIC DNA]</scope>
    <source>
        <strain>Tucson 15010-1051.87</strain>
    </source>
</reference>
<dbReference type="EMBL" id="CH940649">
    <property type="protein sequence ID" value="EDW63658.1"/>
    <property type="molecule type" value="Genomic_DNA"/>
</dbReference>
<dbReference type="RefSeq" id="XP_002051503.1">
    <property type="nucleotide sequence ID" value="XM_002051467.4"/>
</dbReference>
<dbReference type="SMR" id="B4LRY2"/>
<dbReference type="FunCoup" id="B4LRY2">
    <property type="interactions" value="2184"/>
</dbReference>
<dbReference type="STRING" id="7244.B4LRY2"/>
<dbReference type="EnsemblMetazoa" id="FBtr0231921">
    <property type="protein sequence ID" value="FBpp0230413"/>
    <property type="gene ID" value="FBgn0203181"/>
</dbReference>
<dbReference type="EnsemblMetazoa" id="XM_002051467.3">
    <property type="protein sequence ID" value="XP_002051503.1"/>
    <property type="gene ID" value="LOC6628653"/>
</dbReference>
<dbReference type="GeneID" id="6628653"/>
<dbReference type="KEGG" id="dvi:6628653"/>
<dbReference type="CTD" id="57019"/>
<dbReference type="eggNOG" id="KOG4020">
    <property type="taxonomic scope" value="Eukaryota"/>
</dbReference>
<dbReference type="HOGENOM" id="CLU_064393_1_0_1"/>
<dbReference type="InParanoid" id="B4LRY2"/>
<dbReference type="OMA" id="GFINCRE"/>
<dbReference type="OrthoDB" id="311633at2759"/>
<dbReference type="PhylomeDB" id="B4LRY2"/>
<dbReference type="Proteomes" id="UP000008792">
    <property type="component" value="Unassembled WGS sequence"/>
</dbReference>
<dbReference type="GO" id="GO:0005758">
    <property type="term" value="C:mitochondrial intermembrane space"/>
    <property type="evidence" value="ECO:0007669"/>
    <property type="project" value="UniProtKB-SubCell"/>
</dbReference>
<dbReference type="GO" id="GO:0051537">
    <property type="term" value="F:2 iron, 2 sulfur cluster binding"/>
    <property type="evidence" value="ECO:0007669"/>
    <property type="project" value="UniProtKB-UniRule"/>
</dbReference>
<dbReference type="GO" id="GO:0051539">
    <property type="term" value="F:4 iron, 4 sulfur cluster binding"/>
    <property type="evidence" value="ECO:0007669"/>
    <property type="project" value="UniProtKB-KW"/>
</dbReference>
<dbReference type="GO" id="GO:0009055">
    <property type="term" value="F:electron transfer activity"/>
    <property type="evidence" value="ECO:0007669"/>
    <property type="project" value="UniProtKB-UniRule"/>
</dbReference>
<dbReference type="GO" id="GO:0046872">
    <property type="term" value="F:metal ion binding"/>
    <property type="evidence" value="ECO:0007669"/>
    <property type="project" value="UniProtKB-KW"/>
</dbReference>
<dbReference type="GO" id="GO:0016226">
    <property type="term" value="P:iron-sulfur cluster assembly"/>
    <property type="evidence" value="ECO:0007669"/>
    <property type="project" value="UniProtKB-UniRule"/>
</dbReference>
<dbReference type="Gene3D" id="3.40.50.150">
    <property type="entry name" value="Vaccinia Virus protein VP39"/>
    <property type="match status" value="1"/>
</dbReference>
<dbReference type="HAMAP" id="MF_03115">
    <property type="entry name" value="Anamorsin"/>
    <property type="match status" value="1"/>
</dbReference>
<dbReference type="InterPro" id="IPR007785">
    <property type="entry name" value="Anamorsin"/>
</dbReference>
<dbReference type="InterPro" id="IPR049011">
    <property type="entry name" value="Anamorsin_N_metazoan"/>
</dbReference>
<dbReference type="InterPro" id="IPR046408">
    <property type="entry name" value="CIAPIN1"/>
</dbReference>
<dbReference type="InterPro" id="IPR029063">
    <property type="entry name" value="SAM-dependent_MTases_sf"/>
</dbReference>
<dbReference type="PANTHER" id="PTHR13273">
    <property type="entry name" value="ANAMORSIN"/>
    <property type="match status" value="1"/>
</dbReference>
<dbReference type="PANTHER" id="PTHR13273:SF14">
    <property type="entry name" value="ANAMORSIN"/>
    <property type="match status" value="1"/>
</dbReference>
<dbReference type="Pfam" id="PF20922">
    <property type="entry name" value="Anamorsin_N"/>
    <property type="match status" value="1"/>
</dbReference>
<dbReference type="Pfam" id="PF05093">
    <property type="entry name" value="CIAPIN1"/>
    <property type="match status" value="2"/>
</dbReference>
<organism>
    <name type="scientific">Drosophila virilis</name>
    <name type="common">Fruit fly</name>
    <dbReference type="NCBI Taxonomy" id="7244"/>
    <lineage>
        <taxon>Eukaryota</taxon>
        <taxon>Metazoa</taxon>
        <taxon>Ecdysozoa</taxon>
        <taxon>Arthropoda</taxon>
        <taxon>Hexapoda</taxon>
        <taxon>Insecta</taxon>
        <taxon>Pterygota</taxon>
        <taxon>Neoptera</taxon>
        <taxon>Endopterygota</taxon>
        <taxon>Diptera</taxon>
        <taxon>Brachycera</taxon>
        <taxon>Muscomorpha</taxon>
        <taxon>Ephydroidea</taxon>
        <taxon>Drosophilidae</taxon>
        <taxon>Drosophila</taxon>
    </lineage>
</organism>
<protein>
    <recommendedName>
        <fullName evidence="1">Anamorsin homolog</fullName>
    </recommendedName>
    <alternativeName>
        <fullName evidence="1">Fe-S cluster assembly protein DRE2 homolog</fullName>
    </alternativeName>
</protein>
<keyword id="KW-0001">2Fe-2S</keyword>
<keyword id="KW-0004">4Fe-4S</keyword>
<keyword id="KW-0963">Cytoplasm</keyword>
<keyword id="KW-0408">Iron</keyword>
<keyword id="KW-0411">Iron-sulfur</keyword>
<keyword id="KW-0479">Metal-binding</keyword>
<keyword id="KW-0496">Mitochondrion</keyword>
<keyword id="KW-1185">Reference proteome</keyword>
<comment type="function">
    <text evidence="1">Component of the cytosolic iron-sulfur (Fe-S) protein assembly (CIA) machinery. Required for the maturation of extramitochondrial Fe-S proteins. Part of an electron transfer chain functioning in an early step of cytosolic Fe-S biogenesis, facilitating the de novo assembly of a [4Fe-4S] cluster on the cytosolic Fe-S scaffold complex. Electrons are transferred from NADPH via a FAD- and FMN-containing diflavin oxidoreductase. Together with the diflavin oxidoreductase, also required for the assembly of the diferric tyrosyl radical cofactor of ribonucleotide reductase (RNR), probably by providing electrons for reduction during radical cofactor maturation in the catalytic small subunit.</text>
</comment>
<comment type="cofactor">
    <cofactor evidence="1">
        <name>[2Fe-2S] cluster</name>
        <dbReference type="ChEBI" id="CHEBI:190135"/>
    </cofactor>
</comment>
<comment type="cofactor">
    <cofactor evidence="1">
        <name>[4Fe-4S] cluster</name>
        <dbReference type="ChEBI" id="CHEBI:49883"/>
    </cofactor>
</comment>
<comment type="subunit">
    <text evidence="1">Monomer.</text>
</comment>
<comment type="subcellular location">
    <subcellularLocation>
        <location evidence="1">Cytoplasm</location>
    </subcellularLocation>
    <subcellularLocation>
        <location evidence="1">Mitochondrion intermembrane space</location>
    </subcellularLocation>
</comment>
<comment type="domain">
    <text evidence="1">The C-terminal domain binds 2 Fe-S clusters but is otherwise mostly in an intrinsically disordered conformation.</text>
</comment>
<comment type="domain">
    <text evidence="1">The N-terminal domain has structural similarity with S-adenosyl-L-methionine-dependent methyltransferases, but does not bind S-adenosyl-L-methionine. It is required for correct assembly of the 2 Fe-S clusters.</text>
</comment>
<comment type="domain">
    <text evidence="1">The twin Cx2C motifs are involved in the recognition by the mitochondrial MIA40-ERV1 disulfide relay system. The formation of 2 disulfide bonds in the Cx2C motifs through dithiol/disulfide exchange reactions effectively traps the protein in the mitochondrial intermembrane space.</text>
</comment>
<comment type="similarity">
    <text evidence="1">Belongs to the anamorsin family.</text>
</comment>
<evidence type="ECO:0000255" key="1">
    <source>
        <dbReference type="HAMAP-Rule" id="MF_03115"/>
    </source>
</evidence>
<sequence length="248" mass="27128">MEQFKGLQKSLYIWTDSAELDKRVETLKAATGGEVAVENVHRLSFSSYANSSFDLIVIECAQLTDNYVKLLHMLKPSGILHLFAYIGPAGSLLQEIKLSGFINCREDAVANTLTAEKPGYETGSSARLSFAKKTSSVNVWKISGDDEELIDEEELLDEEDKQKPDPAGLRVCSTTGKRKACKNCSCGLAEELESEKTTKTVTENAKSSCGNCYLGDAFRCSTCPYLGMPAFKPGEKVQLADNLLKSDI</sequence>
<gene>
    <name evidence="1" type="primary">CIAPIN1</name>
    <name evidence="1" type="synonym">l(2)35Bg</name>
    <name type="ORF">GJ15996</name>
</gene>